<keyword id="KW-0028">Amino-acid biosynthesis</keyword>
<keyword id="KW-0963">Cytoplasm</keyword>
<keyword id="KW-0368">Histidine biosynthesis</keyword>
<keyword id="KW-1185">Reference proteome</keyword>
<feature type="chain" id="PRO_0000242820" description="ATP phosphoribosyltransferase regulatory subunit">
    <location>
        <begin position="1"/>
        <end position="393"/>
    </location>
</feature>
<comment type="function">
    <text evidence="1">Required for the first step of histidine biosynthesis. May allow the feedback regulation of ATP phosphoribosyltransferase activity by histidine.</text>
</comment>
<comment type="pathway">
    <text evidence="1">Amino-acid biosynthesis; L-histidine biosynthesis; L-histidine from 5-phospho-alpha-D-ribose 1-diphosphate: step 1/9.</text>
</comment>
<comment type="subunit">
    <text evidence="1">Heteromultimer composed of HisG and HisZ subunits.</text>
</comment>
<comment type="subcellular location">
    <subcellularLocation>
        <location evidence="1">Cytoplasm</location>
    </subcellularLocation>
</comment>
<comment type="miscellaneous">
    <text>This function is generally fulfilled by the C-terminal part of HisG, which is missing in some bacteria such as this one.</text>
</comment>
<comment type="similarity">
    <text evidence="1">Belongs to the class-II aminoacyl-tRNA synthetase family. HisZ subfamily.</text>
</comment>
<accession>Q5WDH6</accession>
<gene>
    <name evidence="1" type="primary">hisZ</name>
    <name type="ordered locus">ABC3050</name>
</gene>
<proteinExistence type="inferred from homology"/>
<sequence>MSEPFMFEKPLGMRDVLPNLHSMQRKLGDRVLQEFRLWGYEQVQTPTLEYYETVGKASAISDKQLFKLIDFHGNTLVLRPDMTAPIARLVSSSMKDIPYPLRLSYCSSLYRALQTEGGRPAEFAQVGVELVGDHTASADGEMLLLLNRALIQAGLDHFQVAVGHIGFLNALFLEIFGTVERAELLRRQLYEKNDVGFKEQVKAFGLSSIDEKKLLKLSRLRGNEAILAEAEQLTESAEGKQAVAELRDLWQGLKEGGLTRYMKLDLSLVLHMSYYTGCIFEVYHDRLPRPLGGGGRYDHLLAKFGRPGPATGFGLRLDLLAEAVGKLEVQPKKRCLLYSRERRQEAYRKATALREKGMQVVLQDVAGVDDIDKMSASYEEIVYLIGKTEEGKR</sequence>
<protein>
    <recommendedName>
        <fullName evidence="1">ATP phosphoribosyltransferase regulatory subunit</fullName>
    </recommendedName>
</protein>
<organism>
    <name type="scientific">Shouchella clausii (strain KSM-K16)</name>
    <name type="common">Alkalihalobacillus clausii</name>
    <dbReference type="NCBI Taxonomy" id="66692"/>
    <lineage>
        <taxon>Bacteria</taxon>
        <taxon>Bacillati</taxon>
        <taxon>Bacillota</taxon>
        <taxon>Bacilli</taxon>
        <taxon>Bacillales</taxon>
        <taxon>Bacillaceae</taxon>
        <taxon>Shouchella</taxon>
    </lineage>
</organism>
<reference key="1">
    <citation type="submission" date="2003-10" db="EMBL/GenBank/DDBJ databases">
        <title>The complete genome sequence of the alkaliphilic Bacillus clausii KSM-K16.</title>
        <authorList>
            <person name="Takaki Y."/>
            <person name="Kageyama Y."/>
            <person name="Shimamura S."/>
            <person name="Suzuki H."/>
            <person name="Nishi S."/>
            <person name="Hatada Y."/>
            <person name="Kawai S."/>
            <person name="Ito S."/>
            <person name="Horikoshi K."/>
        </authorList>
    </citation>
    <scope>NUCLEOTIDE SEQUENCE [LARGE SCALE GENOMIC DNA]</scope>
    <source>
        <strain>KSM-K16</strain>
    </source>
</reference>
<name>HISZ_SHOC1</name>
<dbReference type="EMBL" id="AP006627">
    <property type="protein sequence ID" value="BAD65584.1"/>
    <property type="molecule type" value="Genomic_DNA"/>
</dbReference>
<dbReference type="RefSeq" id="WP_011247892.1">
    <property type="nucleotide sequence ID" value="NC_006582.1"/>
</dbReference>
<dbReference type="SMR" id="Q5WDH6"/>
<dbReference type="STRING" id="66692.ABC3050"/>
<dbReference type="KEGG" id="bcl:ABC3050"/>
<dbReference type="eggNOG" id="COG3705">
    <property type="taxonomic scope" value="Bacteria"/>
</dbReference>
<dbReference type="HOGENOM" id="CLU_025113_0_0_9"/>
<dbReference type="OrthoDB" id="9800814at2"/>
<dbReference type="UniPathway" id="UPA00031">
    <property type="reaction ID" value="UER00006"/>
</dbReference>
<dbReference type="Proteomes" id="UP000001168">
    <property type="component" value="Chromosome"/>
</dbReference>
<dbReference type="GO" id="GO:0005737">
    <property type="term" value="C:cytoplasm"/>
    <property type="evidence" value="ECO:0007669"/>
    <property type="project" value="UniProtKB-SubCell"/>
</dbReference>
<dbReference type="GO" id="GO:0140096">
    <property type="term" value="F:catalytic activity, acting on a protein"/>
    <property type="evidence" value="ECO:0007669"/>
    <property type="project" value="UniProtKB-ARBA"/>
</dbReference>
<dbReference type="GO" id="GO:0004821">
    <property type="term" value="F:histidine-tRNA ligase activity"/>
    <property type="evidence" value="ECO:0007669"/>
    <property type="project" value="InterPro"/>
</dbReference>
<dbReference type="GO" id="GO:0016740">
    <property type="term" value="F:transferase activity"/>
    <property type="evidence" value="ECO:0007669"/>
    <property type="project" value="UniProtKB-ARBA"/>
</dbReference>
<dbReference type="GO" id="GO:0006427">
    <property type="term" value="P:histidyl-tRNA aminoacylation"/>
    <property type="evidence" value="ECO:0007669"/>
    <property type="project" value="InterPro"/>
</dbReference>
<dbReference type="GO" id="GO:0000105">
    <property type="term" value="P:L-histidine biosynthetic process"/>
    <property type="evidence" value="ECO:0007669"/>
    <property type="project" value="UniProtKB-UniRule"/>
</dbReference>
<dbReference type="CDD" id="cd00773">
    <property type="entry name" value="HisRS-like_core"/>
    <property type="match status" value="1"/>
</dbReference>
<dbReference type="Gene3D" id="3.40.50.12590">
    <property type="match status" value="1"/>
</dbReference>
<dbReference type="Gene3D" id="3.30.930.10">
    <property type="entry name" value="Bira Bifunctional Protein, Domain 2"/>
    <property type="match status" value="1"/>
</dbReference>
<dbReference type="HAMAP" id="MF_00125">
    <property type="entry name" value="HisZ"/>
    <property type="match status" value="1"/>
</dbReference>
<dbReference type="InterPro" id="IPR006195">
    <property type="entry name" value="aa-tRNA-synth_II"/>
</dbReference>
<dbReference type="InterPro" id="IPR045864">
    <property type="entry name" value="aa-tRNA-synth_II/BPL/LPL"/>
</dbReference>
<dbReference type="InterPro" id="IPR041715">
    <property type="entry name" value="HisRS-like_core"/>
</dbReference>
<dbReference type="InterPro" id="IPR004516">
    <property type="entry name" value="HisRS/HisZ"/>
</dbReference>
<dbReference type="InterPro" id="IPR004517">
    <property type="entry name" value="HisZ"/>
</dbReference>
<dbReference type="InterPro" id="IPR053846">
    <property type="entry name" value="HisZ-C"/>
</dbReference>
<dbReference type="NCBIfam" id="TIGR00443">
    <property type="entry name" value="hisZ_biosyn_reg"/>
    <property type="match status" value="1"/>
</dbReference>
<dbReference type="NCBIfam" id="NF008941">
    <property type="entry name" value="PRK12292.2-4"/>
    <property type="match status" value="1"/>
</dbReference>
<dbReference type="PANTHER" id="PTHR43707:SF1">
    <property type="entry name" value="HISTIDINE--TRNA LIGASE, MITOCHONDRIAL-RELATED"/>
    <property type="match status" value="1"/>
</dbReference>
<dbReference type="PANTHER" id="PTHR43707">
    <property type="entry name" value="HISTIDYL-TRNA SYNTHETASE"/>
    <property type="match status" value="1"/>
</dbReference>
<dbReference type="Pfam" id="PF21996">
    <property type="entry name" value="HisZ-like"/>
    <property type="match status" value="1"/>
</dbReference>
<dbReference type="Pfam" id="PF13393">
    <property type="entry name" value="tRNA-synt_His"/>
    <property type="match status" value="1"/>
</dbReference>
<dbReference type="PIRSF" id="PIRSF001549">
    <property type="entry name" value="His-tRNA_synth"/>
    <property type="match status" value="1"/>
</dbReference>
<dbReference type="SUPFAM" id="SSF55681">
    <property type="entry name" value="Class II aaRS and biotin synthetases"/>
    <property type="match status" value="1"/>
</dbReference>
<dbReference type="PROSITE" id="PS50862">
    <property type="entry name" value="AA_TRNA_LIGASE_II"/>
    <property type="match status" value="1"/>
</dbReference>
<evidence type="ECO:0000255" key="1">
    <source>
        <dbReference type="HAMAP-Rule" id="MF_00125"/>
    </source>
</evidence>